<reference key="1">
    <citation type="journal article" date="1988" name="J. Bacteriol.">
        <title>Antigenic relatedness and N-terminal sequence homology define two classes of periplasmic flagellar proteins of Treponema pallidum subsp. pallidum and Treponema phagedenis.</title>
        <authorList>
            <person name="Norris S.J."/>
            <person name="Charon N.W."/>
            <person name="Cook R.G."/>
            <person name="Fuentes M.D."/>
            <person name="Limberger R.J."/>
        </authorList>
    </citation>
    <scope>NUCLEOTIDE SEQUENCE [GENOMIC DNA]</scope>
    <scope>PROTEIN SEQUENCE OF 1-27</scope>
</reference>
<comment type="function">
    <text>Component of the core of the flagella.</text>
</comment>
<comment type="subunit">
    <text>The flagellum consists of an outer layer composed of repeating units of FlaA around a core that contains several antigenically related polypeptides.</text>
</comment>
<comment type="subcellular location">
    <subcellularLocation>
        <location>Periplasmic flagellum</location>
    </subcellularLocation>
    <subcellularLocation>
        <location>Periplasm</location>
    </subcellularLocation>
</comment>
<comment type="similarity">
    <text evidence="1">Belongs to the bacterial flagellin family.</text>
</comment>
<sequence>MIINHNMSAMFAQRTLGNTNLSVQKNMEKLSSGLRINRAGDDASGLAVSEKMRSQIRGLNQASTNAQNGISFIQVAESYLQETTDVIQRIRELSVQSANGIYSAEDRMYIQVEVSQLVAEIDRIASHAQFNGMNMLTGRFARETGENTVTASMWFHIGANMDQRTRAYIGTMTAAALGVRDVGDESILNIDDPEKANRAIGTLDEAIKKINKQRADLGAYQNRLEYTVIGVNVAAENLQAAESRIRDVDMAKEMVDYTKNQILVQSGTAMLAQANQATQSVLSLLR</sequence>
<evidence type="ECO:0000305" key="1"/>
<name>FLA2_TREPH</name>
<keyword id="KW-0975">Bacterial flagellum</keyword>
<keyword id="KW-0903">Direct protein sequencing</keyword>
<keyword id="KW-0574">Periplasm</keyword>
<protein>
    <recommendedName>
        <fullName>Flagellar filament 33 kDa core protein</fullName>
    </recommendedName>
    <alternativeName>
        <fullName>Class B</fullName>
    </alternativeName>
</protein>
<accession>P21989</accession>
<organism>
    <name type="scientific">Treponema phagedenis</name>
    <dbReference type="NCBI Taxonomy" id="162"/>
    <lineage>
        <taxon>Bacteria</taxon>
        <taxon>Pseudomonadati</taxon>
        <taxon>Spirochaetota</taxon>
        <taxon>Spirochaetia</taxon>
        <taxon>Spirochaetales</taxon>
        <taxon>Treponemataceae</taxon>
        <taxon>Treponema</taxon>
    </lineage>
</organism>
<proteinExistence type="evidence at protein level"/>
<feature type="chain" id="PRO_0000182633" description="Flagellar filament 33 kDa core protein">
    <location>
        <begin position="1"/>
        <end position="286"/>
    </location>
</feature>
<dbReference type="EMBL" id="M94015">
    <property type="protein sequence ID" value="AAC28741.1"/>
    <property type="molecule type" value="Genomic_DNA"/>
</dbReference>
<dbReference type="PIR" id="F32351">
    <property type="entry name" value="F32351"/>
</dbReference>
<dbReference type="RefSeq" id="WP_024752187.1">
    <property type="nucleotide sequence ID" value="NZ_VOQA01000001.1"/>
</dbReference>
<dbReference type="SMR" id="P21989"/>
<dbReference type="GeneID" id="57752317"/>
<dbReference type="OrthoDB" id="9796789at2"/>
<dbReference type="GO" id="GO:0055040">
    <property type="term" value="C:periplasmic flagellum"/>
    <property type="evidence" value="ECO:0007669"/>
    <property type="project" value="UniProtKB-SubCell"/>
</dbReference>
<dbReference type="GO" id="GO:0005198">
    <property type="term" value="F:structural molecule activity"/>
    <property type="evidence" value="ECO:0007669"/>
    <property type="project" value="InterPro"/>
</dbReference>
<dbReference type="Gene3D" id="1.20.1330.10">
    <property type="entry name" value="f41 fragment of flagellin, N-terminal domain"/>
    <property type="match status" value="2"/>
</dbReference>
<dbReference type="Gene3D" id="6.10.10.10">
    <property type="entry name" value="Flagellar export chaperone, C-terminal domain"/>
    <property type="match status" value="1"/>
</dbReference>
<dbReference type="InterPro" id="IPR001492">
    <property type="entry name" value="Flagellin"/>
</dbReference>
<dbReference type="InterPro" id="IPR046358">
    <property type="entry name" value="Flagellin_C"/>
</dbReference>
<dbReference type="InterPro" id="IPR042187">
    <property type="entry name" value="Flagellin_C_sub2"/>
</dbReference>
<dbReference type="InterPro" id="IPR001029">
    <property type="entry name" value="Flagellin_N"/>
</dbReference>
<dbReference type="PANTHER" id="PTHR42792">
    <property type="entry name" value="FLAGELLIN"/>
    <property type="match status" value="1"/>
</dbReference>
<dbReference type="PANTHER" id="PTHR42792:SF2">
    <property type="entry name" value="FLAGELLIN"/>
    <property type="match status" value="1"/>
</dbReference>
<dbReference type="Pfam" id="PF00700">
    <property type="entry name" value="Flagellin_C"/>
    <property type="match status" value="1"/>
</dbReference>
<dbReference type="Pfam" id="PF00669">
    <property type="entry name" value="Flagellin_N"/>
    <property type="match status" value="1"/>
</dbReference>
<dbReference type="PRINTS" id="PR00207">
    <property type="entry name" value="FLAGELLIN"/>
</dbReference>
<dbReference type="SUPFAM" id="SSF64518">
    <property type="entry name" value="Phase 1 flagellin"/>
    <property type="match status" value="1"/>
</dbReference>